<comment type="function">
    <text evidence="2">With CysD forms the ATP sulfurylase (ATPS) that catalyzes the adenylation of sulfate producing adenosine 5'-phosphosulfate (APS) and diphosphate, the first enzymatic step in sulfur assimilation pathway. APS synthesis involves the formation of a high-energy phosphoric-sulfuric acid anhydride bond driven by GTP hydrolysis by CysN coupled to ATP hydrolysis by CysD.</text>
</comment>
<comment type="catalytic activity">
    <reaction evidence="2">
        <text>sulfate + ATP + H(+) = adenosine 5'-phosphosulfate + diphosphate</text>
        <dbReference type="Rhea" id="RHEA:18133"/>
        <dbReference type="ChEBI" id="CHEBI:15378"/>
        <dbReference type="ChEBI" id="CHEBI:16189"/>
        <dbReference type="ChEBI" id="CHEBI:30616"/>
        <dbReference type="ChEBI" id="CHEBI:33019"/>
        <dbReference type="ChEBI" id="CHEBI:58243"/>
        <dbReference type="EC" id="2.7.7.4"/>
    </reaction>
</comment>
<comment type="pathway">
    <text evidence="2">Sulfur metabolism; hydrogen sulfide biosynthesis; sulfite from sulfate: step 1/3.</text>
</comment>
<comment type="subunit">
    <text evidence="2">Heterodimer composed of CysD, the smaller subunit, and CysN.</text>
</comment>
<comment type="similarity">
    <text evidence="2">Belongs to the TRAFAC class translation factor GTPase superfamily. Classic translation factor GTPase family. CysN/NodQ subfamily.</text>
</comment>
<sequence>MNSAVQAQLAELGIEGYLNQHQHKSLLRFLTCGSVDDGKSTLIGRLLHDSKQIYEDQLAAVHNDSQRVGTTGSRPDLALLVDGLQAEREQGITIDVAYRYFSTQKRKFIIADTPGHEQYTRNMATGASTCDLAVILIDARKGVLDQTRRHSFISNLLGLKHFVVAVNKMDLVEFSQQRFEEIKAEYQAFSKNLRGETDIQIIPISALEGDNVVELSQQMAWYQGPTLLEILESVDVVKEKEAGEFRFPVQYVNRPNLDFRGFAGTISSGVVKVGDRITALPSGKSSTVARIVTFDGDLEQAQAGLAVTLTLADEIDISRGDLIVHHGANVELTNHLAADVVWMTEQPLQPGRDYDIKIAGKKTIGRVEHIHHQYDINNLSKHSAAELPLNGIGLCEWTFNESIALDNYQDCADTGGFIIIDRLTNVTVGAGMVSESLTEVTKASSDFSAFELELNALIRKHFPHWDAKDLSELLKK</sequence>
<keyword id="KW-0067">ATP-binding</keyword>
<keyword id="KW-0342">GTP-binding</keyword>
<keyword id="KW-0547">Nucleotide-binding</keyword>
<keyword id="KW-0548">Nucleotidyltransferase</keyword>
<keyword id="KW-0808">Transferase</keyword>
<reference key="1">
    <citation type="submission" date="2002-12" db="EMBL/GenBank/DDBJ databases">
        <title>Complete genome sequence of Vibrio vulnificus CMCP6.</title>
        <authorList>
            <person name="Rhee J.H."/>
            <person name="Kim S.Y."/>
            <person name="Chung S.S."/>
            <person name="Kim J.J."/>
            <person name="Moon Y.H."/>
            <person name="Jeong H."/>
            <person name="Choy H.E."/>
        </authorList>
    </citation>
    <scope>NUCLEOTIDE SEQUENCE [LARGE SCALE GENOMIC DNA]</scope>
    <source>
        <strain>CMCP6</strain>
    </source>
</reference>
<evidence type="ECO:0000250" key="1"/>
<evidence type="ECO:0000255" key="2">
    <source>
        <dbReference type="HAMAP-Rule" id="MF_00062"/>
    </source>
</evidence>
<dbReference type="EC" id="2.7.7.4" evidence="2"/>
<dbReference type="EMBL" id="AE016795">
    <property type="protein sequence ID" value="AAO09234.1"/>
    <property type="molecule type" value="Genomic_DNA"/>
</dbReference>
<dbReference type="RefSeq" id="WP_011078800.1">
    <property type="nucleotide sequence ID" value="NC_004459.3"/>
</dbReference>
<dbReference type="SMR" id="Q8DE73"/>
<dbReference type="KEGG" id="vvu:VV1_0725"/>
<dbReference type="HOGENOM" id="CLU_007265_5_2_6"/>
<dbReference type="UniPathway" id="UPA00140">
    <property type="reaction ID" value="UER00204"/>
</dbReference>
<dbReference type="Proteomes" id="UP000002275">
    <property type="component" value="Chromosome 1"/>
</dbReference>
<dbReference type="GO" id="GO:0005524">
    <property type="term" value="F:ATP binding"/>
    <property type="evidence" value="ECO:0007669"/>
    <property type="project" value="UniProtKB-KW"/>
</dbReference>
<dbReference type="GO" id="GO:0005525">
    <property type="term" value="F:GTP binding"/>
    <property type="evidence" value="ECO:0007669"/>
    <property type="project" value="UniProtKB-UniRule"/>
</dbReference>
<dbReference type="GO" id="GO:0003924">
    <property type="term" value="F:GTPase activity"/>
    <property type="evidence" value="ECO:0007669"/>
    <property type="project" value="InterPro"/>
</dbReference>
<dbReference type="GO" id="GO:0097216">
    <property type="term" value="F:guanosine tetraphosphate binding"/>
    <property type="evidence" value="ECO:0007669"/>
    <property type="project" value="UniProtKB-ARBA"/>
</dbReference>
<dbReference type="GO" id="GO:0004781">
    <property type="term" value="F:sulfate adenylyltransferase (ATP) activity"/>
    <property type="evidence" value="ECO:0007669"/>
    <property type="project" value="UniProtKB-UniRule"/>
</dbReference>
<dbReference type="GO" id="GO:0070814">
    <property type="term" value="P:hydrogen sulfide biosynthetic process"/>
    <property type="evidence" value="ECO:0007669"/>
    <property type="project" value="UniProtKB-UniRule"/>
</dbReference>
<dbReference type="GO" id="GO:0000103">
    <property type="term" value="P:sulfate assimilation"/>
    <property type="evidence" value="ECO:0007669"/>
    <property type="project" value="UniProtKB-UniRule"/>
</dbReference>
<dbReference type="CDD" id="cd04166">
    <property type="entry name" value="CysN_ATPS"/>
    <property type="match status" value="1"/>
</dbReference>
<dbReference type="CDD" id="cd03695">
    <property type="entry name" value="CysN_NodQ_II"/>
    <property type="match status" value="1"/>
</dbReference>
<dbReference type="CDD" id="cd04095">
    <property type="entry name" value="CysN_NoDQ_III"/>
    <property type="match status" value="1"/>
</dbReference>
<dbReference type="FunFam" id="2.40.30.10:FF:000027">
    <property type="entry name" value="Sulfate adenylyltransferase subunit 1"/>
    <property type="match status" value="1"/>
</dbReference>
<dbReference type="FunFam" id="2.40.30.10:FF:000031">
    <property type="entry name" value="Sulfate adenylyltransferase subunit 1"/>
    <property type="match status" value="1"/>
</dbReference>
<dbReference type="FunFam" id="3.40.50.300:FF:000119">
    <property type="entry name" value="Sulfate adenylyltransferase subunit 1"/>
    <property type="match status" value="1"/>
</dbReference>
<dbReference type="Gene3D" id="3.40.50.300">
    <property type="entry name" value="P-loop containing nucleotide triphosphate hydrolases"/>
    <property type="match status" value="1"/>
</dbReference>
<dbReference type="Gene3D" id="2.40.30.10">
    <property type="entry name" value="Translation factors"/>
    <property type="match status" value="2"/>
</dbReference>
<dbReference type="HAMAP" id="MF_00062">
    <property type="entry name" value="Sulf_adenylyltr_sub1"/>
    <property type="match status" value="1"/>
</dbReference>
<dbReference type="InterPro" id="IPR041757">
    <property type="entry name" value="CysN_GTP-bd"/>
</dbReference>
<dbReference type="InterPro" id="IPR044138">
    <property type="entry name" value="CysN_II"/>
</dbReference>
<dbReference type="InterPro" id="IPR044139">
    <property type="entry name" value="CysN_NoDQ_III"/>
</dbReference>
<dbReference type="InterPro" id="IPR004161">
    <property type="entry name" value="EFTu-like_2"/>
</dbReference>
<dbReference type="InterPro" id="IPR031157">
    <property type="entry name" value="G_TR_CS"/>
</dbReference>
<dbReference type="InterPro" id="IPR054696">
    <property type="entry name" value="GTP-eEF1A_C"/>
</dbReference>
<dbReference type="InterPro" id="IPR027417">
    <property type="entry name" value="P-loop_NTPase"/>
</dbReference>
<dbReference type="InterPro" id="IPR005225">
    <property type="entry name" value="Small_GTP-bd"/>
</dbReference>
<dbReference type="InterPro" id="IPR011779">
    <property type="entry name" value="SO4_adenylTrfase_lsu"/>
</dbReference>
<dbReference type="InterPro" id="IPR000795">
    <property type="entry name" value="T_Tr_GTP-bd_dom"/>
</dbReference>
<dbReference type="InterPro" id="IPR050100">
    <property type="entry name" value="TRAFAC_GTPase_members"/>
</dbReference>
<dbReference type="InterPro" id="IPR009000">
    <property type="entry name" value="Transl_B-barrel_sf"/>
</dbReference>
<dbReference type="InterPro" id="IPR009001">
    <property type="entry name" value="Transl_elong_EF1A/Init_IF2_C"/>
</dbReference>
<dbReference type="NCBIfam" id="TIGR02034">
    <property type="entry name" value="CysN"/>
    <property type="match status" value="1"/>
</dbReference>
<dbReference type="NCBIfam" id="NF003478">
    <property type="entry name" value="PRK05124.1"/>
    <property type="match status" value="1"/>
</dbReference>
<dbReference type="NCBIfam" id="TIGR00231">
    <property type="entry name" value="small_GTP"/>
    <property type="match status" value="1"/>
</dbReference>
<dbReference type="PANTHER" id="PTHR23115">
    <property type="entry name" value="TRANSLATION FACTOR"/>
    <property type="match status" value="1"/>
</dbReference>
<dbReference type="Pfam" id="PF22594">
    <property type="entry name" value="GTP-eEF1A_C"/>
    <property type="match status" value="1"/>
</dbReference>
<dbReference type="Pfam" id="PF00009">
    <property type="entry name" value="GTP_EFTU"/>
    <property type="match status" value="1"/>
</dbReference>
<dbReference type="Pfam" id="PF03144">
    <property type="entry name" value="GTP_EFTU_D2"/>
    <property type="match status" value="1"/>
</dbReference>
<dbReference type="PRINTS" id="PR00315">
    <property type="entry name" value="ELONGATNFCT"/>
</dbReference>
<dbReference type="SUPFAM" id="SSF50465">
    <property type="entry name" value="EF-Tu/eEF-1alpha/eIF2-gamma C-terminal domain"/>
    <property type="match status" value="1"/>
</dbReference>
<dbReference type="SUPFAM" id="SSF52540">
    <property type="entry name" value="P-loop containing nucleoside triphosphate hydrolases"/>
    <property type="match status" value="1"/>
</dbReference>
<dbReference type="SUPFAM" id="SSF50447">
    <property type="entry name" value="Translation proteins"/>
    <property type="match status" value="1"/>
</dbReference>
<dbReference type="PROSITE" id="PS00301">
    <property type="entry name" value="G_TR_1"/>
    <property type="match status" value="1"/>
</dbReference>
<dbReference type="PROSITE" id="PS51722">
    <property type="entry name" value="G_TR_2"/>
    <property type="match status" value="1"/>
</dbReference>
<gene>
    <name evidence="2" type="primary">cysN</name>
    <name type="ordered locus">VV1_0725</name>
</gene>
<feature type="chain" id="PRO_0000091534" description="Sulfate adenylyltransferase subunit 1">
    <location>
        <begin position="1"/>
        <end position="476"/>
    </location>
</feature>
<feature type="domain" description="tr-type G">
    <location>
        <begin position="24"/>
        <end position="228"/>
    </location>
</feature>
<feature type="region of interest" description="G1" evidence="1">
    <location>
        <begin position="33"/>
        <end position="40"/>
    </location>
</feature>
<feature type="region of interest" description="G2" evidence="1">
    <location>
        <begin position="91"/>
        <end position="95"/>
    </location>
</feature>
<feature type="region of interest" description="G3" evidence="1">
    <location>
        <begin position="112"/>
        <end position="115"/>
    </location>
</feature>
<feature type="region of interest" description="G4" evidence="1">
    <location>
        <begin position="167"/>
        <end position="170"/>
    </location>
</feature>
<feature type="region of interest" description="G5" evidence="1">
    <location>
        <begin position="205"/>
        <end position="207"/>
    </location>
</feature>
<feature type="binding site" evidence="2">
    <location>
        <begin position="33"/>
        <end position="40"/>
    </location>
    <ligand>
        <name>GTP</name>
        <dbReference type="ChEBI" id="CHEBI:37565"/>
    </ligand>
</feature>
<feature type="binding site" evidence="2">
    <location>
        <begin position="112"/>
        <end position="116"/>
    </location>
    <ligand>
        <name>GTP</name>
        <dbReference type="ChEBI" id="CHEBI:37565"/>
    </ligand>
</feature>
<feature type="binding site" evidence="2">
    <location>
        <begin position="167"/>
        <end position="170"/>
    </location>
    <ligand>
        <name>GTP</name>
        <dbReference type="ChEBI" id="CHEBI:37565"/>
    </ligand>
</feature>
<protein>
    <recommendedName>
        <fullName evidence="2">Sulfate adenylyltransferase subunit 1</fullName>
        <ecNumber evidence="2">2.7.7.4</ecNumber>
    </recommendedName>
    <alternativeName>
        <fullName evidence="2">ATP-sulfurylase large subunit</fullName>
    </alternativeName>
    <alternativeName>
        <fullName evidence="2">Sulfate adenylate transferase</fullName>
        <shortName evidence="2">SAT</shortName>
    </alternativeName>
</protein>
<organism>
    <name type="scientific">Vibrio vulnificus (strain CMCP6)</name>
    <dbReference type="NCBI Taxonomy" id="216895"/>
    <lineage>
        <taxon>Bacteria</taxon>
        <taxon>Pseudomonadati</taxon>
        <taxon>Pseudomonadota</taxon>
        <taxon>Gammaproteobacteria</taxon>
        <taxon>Vibrionales</taxon>
        <taxon>Vibrionaceae</taxon>
        <taxon>Vibrio</taxon>
    </lineage>
</organism>
<accession>Q8DE73</accession>
<name>CYSN_VIBVU</name>
<proteinExistence type="inferred from homology"/>